<sequence>MTLEEFSAGEQKTERMDKVGDALEEVLSKALSQRTITVGVYEAAKLLNVDPDNVVLCLLAADEDDDRDVALQIHFTLIQAFCCENDIDILRVSNPGRLAELLLLETDAGPAASEGAEQPPDLHCVLVTNPHSSQWKDPALSQLICFCRESRYMDQWVPVINLPER</sequence>
<accession>Q3ZBN6</accession>
<organism>
    <name type="scientific">Bos taurus</name>
    <name type="common">Bovine</name>
    <dbReference type="NCBI Taxonomy" id="9913"/>
    <lineage>
        <taxon>Eukaryota</taxon>
        <taxon>Metazoa</taxon>
        <taxon>Chordata</taxon>
        <taxon>Craniata</taxon>
        <taxon>Vertebrata</taxon>
        <taxon>Euteleostomi</taxon>
        <taxon>Mammalia</taxon>
        <taxon>Eutheria</taxon>
        <taxon>Laurasiatheria</taxon>
        <taxon>Artiodactyla</taxon>
        <taxon>Ruminantia</taxon>
        <taxon>Pecora</taxon>
        <taxon>Bovidae</taxon>
        <taxon>Bovinae</taxon>
        <taxon>Bos</taxon>
    </lineage>
</organism>
<proteinExistence type="evidence at transcript level"/>
<name>GA45A_BOVIN</name>
<feature type="chain" id="PRO_0000228616" description="Growth arrest and DNA damage-inducible protein GADD45 alpha">
    <location>
        <begin position="1"/>
        <end position="165"/>
    </location>
</feature>
<feature type="modified residue" description="Phosphothreonine" evidence="2">
    <location>
        <position position="2"/>
    </location>
</feature>
<gene>
    <name type="primary">GADD45A</name>
</gene>
<keyword id="KW-0131">Cell cycle</keyword>
<keyword id="KW-0227">DNA damage</keyword>
<keyword id="KW-0338">Growth arrest</keyword>
<keyword id="KW-0539">Nucleus</keyword>
<keyword id="KW-0597">Phosphoprotein</keyword>
<keyword id="KW-1185">Reference proteome</keyword>
<evidence type="ECO:0000250" key="1"/>
<evidence type="ECO:0000250" key="2">
    <source>
        <dbReference type="UniProtKB" id="P24522"/>
    </source>
</evidence>
<evidence type="ECO:0000305" key="3"/>
<reference key="1">
    <citation type="submission" date="2005-08" db="EMBL/GenBank/DDBJ databases">
        <authorList>
            <consortium name="NIH - Mammalian Gene Collection (MGC) project"/>
        </authorList>
    </citation>
    <scope>NUCLEOTIDE SEQUENCE [LARGE SCALE MRNA]</scope>
    <source>
        <strain>Hereford</strain>
        <tissue>Pancreas</tissue>
    </source>
</reference>
<dbReference type="EMBL" id="BC103198">
    <property type="protein sequence ID" value="AAI03199.1"/>
    <property type="molecule type" value="mRNA"/>
</dbReference>
<dbReference type="RefSeq" id="NP_001029419.1">
    <property type="nucleotide sequence ID" value="NM_001034247.1"/>
</dbReference>
<dbReference type="BMRB" id="Q3ZBN6"/>
<dbReference type="SMR" id="Q3ZBN6"/>
<dbReference type="FunCoup" id="Q3ZBN6">
    <property type="interactions" value="734"/>
</dbReference>
<dbReference type="STRING" id="9913.ENSBTAP00000033363"/>
<dbReference type="PaxDb" id="9913-ENSBTAP00000033363"/>
<dbReference type="Ensembl" id="ENSBTAT00000033450.2">
    <property type="protein sequence ID" value="ENSBTAP00000033363.1"/>
    <property type="gene ID" value="ENSBTAG00000013860.5"/>
</dbReference>
<dbReference type="GeneID" id="505463"/>
<dbReference type="KEGG" id="bta:505463"/>
<dbReference type="CTD" id="1647"/>
<dbReference type="VEuPathDB" id="HostDB:ENSBTAG00000013860"/>
<dbReference type="VGNC" id="VGNC:29206">
    <property type="gene designation" value="GADD45A"/>
</dbReference>
<dbReference type="eggNOG" id="ENOG502RY8P">
    <property type="taxonomic scope" value="Eukaryota"/>
</dbReference>
<dbReference type="GeneTree" id="ENSGT00950000182964"/>
<dbReference type="HOGENOM" id="CLU_118164_0_0_1"/>
<dbReference type="InParanoid" id="Q3ZBN6"/>
<dbReference type="OMA" id="FRMTFEE"/>
<dbReference type="OrthoDB" id="5976967at2759"/>
<dbReference type="TreeFam" id="TF300196"/>
<dbReference type="Reactome" id="R-BTA-6804114">
    <property type="pathway name" value="TP53 Regulates Transcription of Genes Involved in G2 Cell Cycle Arrest"/>
</dbReference>
<dbReference type="Proteomes" id="UP000009136">
    <property type="component" value="Chromosome 3"/>
</dbReference>
<dbReference type="Bgee" id="ENSBTAG00000013860">
    <property type="expression patterns" value="Expressed in bone marrow and 101 other cell types or tissues"/>
</dbReference>
<dbReference type="GO" id="GO:0005737">
    <property type="term" value="C:cytoplasm"/>
    <property type="evidence" value="ECO:0000318"/>
    <property type="project" value="GO_Central"/>
</dbReference>
<dbReference type="GO" id="GO:0016607">
    <property type="term" value="C:nuclear speck"/>
    <property type="evidence" value="ECO:0007669"/>
    <property type="project" value="Ensembl"/>
</dbReference>
<dbReference type="GO" id="GO:0005634">
    <property type="term" value="C:nucleus"/>
    <property type="evidence" value="ECO:0000318"/>
    <property type="project" value="GO_Central"/>
</dbReference>
<dbReference type="GO" id="GO:0019900">
    <property type="term" value="F:kinase binding"/>
    <property type="evidence" value="ECO:0007669"/>
    <property type="project" value="Ensembl"/>
</dbReference>
<dbReference type="GO" id="GO:0046982">
    <property type="term" value="F:protein heterodimerization activity"/>
    <property type="evidence" value="ECO:0007669"/>
    <property type="project" value="Ensembl"/>
</dbReference>
<dbReference type="GO" id="GO:0042803">
    <property type="term" value="F:protein homodimerization activity"/>
    <property type="evidence" value="ECO:0007669"/>
    <property type="project" value="Ensembl"/>
</dbReference>
<dbReference type="GO" id="GO:0071479">
    <property type="term" value="P:cellular response to ionizing radiation"/>
    <property type="evidence" value="ECO:0007669"/>
    <property type="project" value="Ensembl"/>
</dbReference>
<dbReference type="GO" id="GO:0071260">
    <property type="term" value="P:cellular response to mechanical stimulus"/>
    <property type="evidence" value="ECO:0007669"/>
    <property type="project" value="Ensembl"/>
</dbReference>
<dbReference type="GO" id="GO:0043537">
    <property type="term" value="P:negative regulation of blood vessel endothelial cell migration"/>
    <property type="evidence" value="ECO:0007669"/>
    <property type="project" value="Ensembl"/>
</dbReference>
<dbReference type="GO" id="GO:0000122">
    <property type="term" value="P:negative regulation of transcription by RNA polymerase II"/>
    <property type="evidence" value="ECO:0007669"/>
    <property type="project" value="Ensembl"/>
</dbReference>
<dbReference type="GO" id="GO:0043065">
    <property type="term" value="P:positive regulation of apoptotic process"/>
    <property type="evidence" value="ECO:0007669"/>
    <property type="project" value="Ensembl"/>
</dbReference>
<dbReference type="GO" id="GO:0046330">
    <property type="term" value="P:positive regulation of JNK cascade"/>
    <property type="evidence" value="ECO:0007669"/>
    <property type="project" value="Ensembl"/>
</dbReference>
<dbReference type="GO" id="GO:1900745">
    <property type="term" value="P:positive regulation of p38MAPK cascade"/>
    <property type="evidence" value="ECO:0007669"/>
    <property type="project" value="Ensembl"/>
</dbReference>
<dbReference type="GO" id="GO:2000379">
    <property type="term" value="P:positive regulation of reactive oxygen species metabolic process"/>
    <property type="evidence" value="ECO:0007669"/>
    <property type="project" value="Ensembl"/>
</dbReference>
<dbReference type="GO" id="GO:0051726">
    <property type="term" value="P:regulation of cell cycle"/>
    <property type="evidence" value="ECO:0000318"/>
    <property type="project" value="GO_Central"/>
</dbReference>
<dbReference type="GO" id="GO:0042770">
    <property type="term" value="P:signal transduction in response to DNA damage"/>
    <property type="evidence" value="ECO:0007669"/>
    <property type="project" value="Ensembl"/>
</dbReference>
<dbReference type="FunFam" id="3.30.1330.30:FF:000012">
    <property type="entry name" value="growth arrest and DNA damage-inducible protein GADD45 alpha"/>
    <property type="match status" value="1"/>
</dbReference>
<dbReference type="Gene3D" id="3.30.1330.30">
    <property type="match status" value="1"/>
</dbReference>
<dbReference type="InterPro" id="IPR024824">
    <property type="entry name" value="GADD45"/>
</dbReference>
<dbReference type="InterPro" id="IPR029064">
    <property type="entry name" value="Ribosomal_eL30-like_sf"/>
</dbReference>
<dbReference type="InterPro" id="IPR004038">
    <property type="entry name" value="Ribosomal_eL8/eL30/eS12/Gad45"/>
</dbReference>
<dbReference type="PANTHER" id="PTHR10411">
    <property type="entry name" value="GROWTH ARREST AND DNA DAMAGE-INDUCIBLE PROTEIN GADD45"/>
    <property type="match status" value="1"/>
</dbReference>
<dbReference type="PANTHER" id="PTHR10411:SF3">
    <property type="entry name" value="GROWTH ARREST AND DNA DAMAGE-INDUCIBLE PROTEIN GADD45 ALPHA"/>
    <property type="match status" value="1"/>
</dbReference>
<dbReference type="Pfam" id="PF01248">
    <property type="entry name" value="Ribosomal_L7Ae"/>
    <property type="match status" value="1"/>
</dbReference>
<dbReference type="SUPFAM" id="SSF55315">
    <property type="entry name" value="L30e-like"/>
    <property type="match status" value="1"/>
</dbReference>
<comment type="function">
    <text evidence="1">Might affect PCNA interaction with some CDK (cell division protein kinase) complexes; stimulates DNA excision repair in vitro and inhibits entry of cells into S phase. In T-cells, functions as a regulator of p38 MAPKs by inhibiting p88 phosphorylation and activity (By similarity).</text>
</comment>
<comment type="subunit">
    <text evidence="1">Interacts with AURKA, PCNA, GADD45GIP1 and MAPK14.</text>
</comment>
<comment type="subcellular location">
    <subcellularLocation>
        <location evidence="1">Nucleus</location>
    </subcellularLocation>
</comment>
<comment type="similarity">
    <text evidence="3">Belongs to the GADD45 family.</text>
</comment>
<protein>
    <recommendedName>
        <fullName>Growth arrest and DNA damage-inducible protein GADD45 alpha</fullName>
    </recommendedName>
</protein>